<organism>
    <name type="scientific">Francisella tularensis subsp. tularensis (strain SCHU S4 / Schu 4)</name>
    <dbReference type="NCBI Taxonomy" id="177416"/>
    <lineage>
        <taxon>Bacteria</taxon>
        <taxon>Pseudomonadati</taxon>
        <taxon>Pseudomonadota</taxon>
        <taxon>Gammaproteobacteria</taxon>
        <taxon>Thiotrichales</taxon>
        <taxon>Francisellaceae</taxon>
        <taxon>Francisella</taxon>
    </lineage>
</organism>
<keyword id="KW-0131">Cell cycle</keyword>
<keyword id="KW-0132">Cell division</keyword>
<keyword id="KW-0133">Cell shape</keyword>
<keyword id="KW-0961">Cell wall biogenesis/degradation</keyword>
<keyword id="KW-0963">Cytoplasm</keyword>
<keyword id="KW-0274">FAD</keyword>
<keyword id="KW-0285">Flavoprotein</keyword>
<keyword id="KW-0521">NADP</keyword>
<keyword id="KW-0560">Oxidoreductase</keyword>
<keyword id="KW-0573">Peptidoglycan synthesis</keyword>
<keyword id="KW-1185">Reference proteome</keyword>
<gene>
    <name evidence="1" type="primary">murB</name>
    <name type="ordered locus">FTT_1304c</name>
</gene>
<comment type="function">
    <text evidence="1">Cell wall formation.</text>
</comment>
<comment type="catalytic activity">
    <reaction evidence="1">
        <text>UDP-N-acetyl-alpha-D-muramate + NADP(+) = UDP-N-acetyl-3-O-(1-carboxyvinyl)-alpha-D-glucosamine + NADPH + H(+)</text>
        <dbReference type="Rhea" id="RHEA:12248"/>
        <dbReference type="ChEBI" id="CHEBI:15378"/>
        <dbReference type="ChEBI" id="CHEBI:57783"/>
        <dbReference type="ChEBI" id="CHEBI:58349"/>
        <dbReference type="ChEBI" id="CHEBI:68483"/>
        <dbReference type="ChEBI" id="CHEBI:70757"/>
        <dbReference type="EC" id="1.3.1.98"/>
    </reaction>
</comment>
<comment type="cofactor">
    <cofactor evidence="1">
        <name>FAD</name>
        <dbReference type="ChEBI" id="CHEBI:57692"/>
    </cofactor>
</comment>
<comment type="pathway">
    <text evidence="1">Cell wall biogenesis; peptidoglycan biosynthesis.</text>
</comment>
<comment type="subcellular location">
    <subcellularLocation>
        <location evidence="1">Cytoplasm</location>
    </subcellularLocation>
</comment>
<comment type="similarity">
    <text evidence="1">Belongs to the MurB family.</text>
</comment>
<proteinExistence type="inferred from homology"/>
<name>MURB_FRATT</name>
<evidence type="ECO:0000255" key="1">
    <source>
        <dbReference type="HAMAP-Rule" id="MF_00037"/>
    </source>
</evidence>
<protein>
    <recommendedName>
        <fullName evidence="1">UDP-N-acetylenolpyruvoylglucosamine reductase</fullName>
        <ecNumber evidence="1">1.3.1.98</ecNumber>
    </recommendedName>
    <alternativeName>
        <fullName evidence="1">UDP-N-acetylmuramate dehydrogenase</fullName>
    </alternativeName>
</protein>
<accession>Q5NFD4</accession>
<dbReference type="EC" id="1.3.1.98" evidence="1"/>
<dbReference type="EMBL" id="AJ749949">
    <property type="protein sequence ID" value="CAG45937.1"/>
    <property type="molecule type" value="Genomic_DNA"/>
</dbReference>
<dbReference type="RefSeq" id="WP_003022017.1">
    <property type="nucleotide sequence ID" value="NC_006570.2"/>
</dbReference>
<dbReference type="RefSeq" id="YP_170258.1">
    <property type="nucleotide sequence ID" value="NC_006570.2"/>
</dbReference>
<dbReference type="SMR" id="Q5NFD4"/>
<dbReference type="STRING" id="177416.FTT_1304c"/>
<dbReference type="DNASU" id="3191254"/>
<dbReference type="EnsemblBacteria" id="CAG45937">
    <property type="protein sequence ID" value="CAG45937"/>
    <property type="gene ID" value="FTT_1304c"/>
</dbReference>
<dbReference type="KEGG" id="ftu:FTT_1304c"/>
<dbReference type="eggNOG" id="COG0812">
    <property type="taxonomic scope" value="Bacteria"/>
</dbReference>
<dbReference type="OrthoDB" id="9804753at2"/>
<dbReference type="UniPathway" id="UPA00219"/>
<dbReference type="Proteomes" id="UP000001174">
    <property type="component" value="Chromosome"/>
</dbReference>
<dbReference type="GO" id="GO:0005829">
    <property type="term" value="C:cytosol"/>
    <property type="evidence" value="ECO:0007669"/>
    <property type="project" value="TreeGrafter"/>
</dbReference>
<dbReference type="GO" id="GO:0071949">
    <property type="term" value="F:FAD binding"/>
    <property type="evidence" value="ECO:0007669"/>
    <property type="project" value="InterPro"/>
</dbReference>
<dbReference type="GO" id="GO:0008762">
    <property type="term" value="F:UDP-N-acetylmuramate dehydrogenase activity"/>
    <property type="evidence" value="ECO:0007669"/>
    <property type="project" value="UniProtKB-UniRule"/>
</dbReference>
<dbReference type="GO" id="GO:0051301">
    <property type="term" value="P:cell division"/>
    <property type="evidence" value="ECO:0007669"/>
    <property type="project" value="UniProtKB-KW"/>
</dbReference>
<dbReference type="GO" id="GO:0071555">
    <property type="term" value="P:cell wall organization"/>
    <property type="evidence" value="ECO:0007669"/>
    <property type="project" value="UniProtKB-KW"/>
</dbReference>
<dbReference type="GO" id="GO:0009252">
    <property type="term" value="P:peptidoglycan biosynthetic process"/>
    <property type="evidence" value="ECO:0007669"/>
    <property type="project" value="UniProtKB-UniRule"/>
</dbReference>
<dbReference type="GO" id="GO:0008360">
    <property type="term" value="P:regulation of cell shape"/>
    <property type="evidence" value="ECO:0007669"/>
    <property type="project" value="UniProtKB-KW"/>
</dbReference>
<dbReference type="Gene3D" id="3.30.465.10">
    <property type="match status" value="1"/>
</dbReference>
<dbReference type="Gene3D" id="3.90.78.10">
    <property type="entry name" value="UDP-N-acetylenolpyruvoylglucosamine reductase, C-terminal domain"/>
    <property type="match status" value="1"/>
</dbReference>
<dbReference type="Gene3D" id="3.30.43.10">
    <property type="entry name" value="Uridine Diphospho-n-acetylenolpyruvylglucosamine Reductase, domain 2"/>
    <property type="match status" value="1"/>
</dbReference>
<dbReference type="HAMAP" id="MF_00037">
    <property type="entry name" value="MurB"/>
    <property type="match status" value="1"/>
</dbReference>
<dbReference type="InterPro" id="IPR016166">
    <property type="entry name" value="FAD-bd_PCMH"/>
</dbReference>
<dbReference type="InterPro" id="IPR036318">
    <property type="entry name" value="FAD-bd_PCMH-like_sf"/>
</dbReference>
<dbReference type="InterPro" id="IPR016167">
    <property type="entry name" value="FAD-bd_PCMH_sub1"/>
</dbReference>
<dbReference type="InterPro" id="IPR016169">
    <property type="entry name" value="FAD-bd_PCMH_sub2"/>
</dbReference>
<dbReference type="InterPro" id="IPR003170">
    <property type="entry name" value="MurB"/>
</dbReference>
<dbReference type="InterPro" id="IPR011601">
    <property type="entry name" value="MurB_C"/>
</dbReference>
<dbReference type="InterPro" id="IPR036635">
    <property type="entry name" value="MurB_C_sf"/>
</dbReference>
<dbReference type="InterPro" id="IPR006094">
    <property type="entry name" value="Oxid_FAD_bind_N"/>
</dbReference>
<dbReference type="NCBIfam" id="TIGR00179">
    <property type="entry name" value="murB"/>
    <property type="match status" value="1"/>
</dbReference>
<dbReference type="PANTHER" id="PTHR21071">
    <property type="entry name" value="UDP-N-ACETYLENOLPYRUVOYLGLUCOSAMINE REDUCTASE"/>
    <property type="match status" value="1"/>
</dbReference>
<dbReference type="PANTHER" id="PTHR21071:SF4">
    <property type="entry name" value="UDP-N-ACETYLENOLPYRUVOYLGLUCOSAMINE REDUCTASE"/>
    <property type="match status" value="1"/>
</dbReference>
<dbReference type="Pfam" id="PF01565">
    <property type="entry name" value="FAD_binding_4"/>
    <property type="match status" value="1"/>
</dbReference>
<dbReference type="Pfam" id="PF02873">
    <property type="entry name" value="MurB_C"/>
    <property type="match status" value="1"/>
</dbReference>
<dbReference type="SUPFAM" id="SSF56176">
    <property type="entry name" value="FAD-binding/transporter-associated domain-like"/>
    <property type="match status" value="1"/>
</dbReference>
<dbReference type="SUPFAM" id="SSF56194">
    <property type="entry name" value="Uridine diphospho-N-Acetylenolpyruvylglucosamine reductase, MurB, C-terminal domain"/>
    <property type="match status" value="1"/>
</dbReference>
<dbReference type="PROSITE" id="PS51387">
    <property type="entry name" value="FAD_PCMH"/>
    <property type="match status" value="1"/>
</dbReference>
<reference key="1">
    <citation type="journal article" date="2005" name="Nat. Genet.">
        <title>The complete genome sequence of Francisella tularensis, the causative agent of tularemia.</title>
        <authorList>
            <person name="Larsson P."/>
            <person name="Oyston P.C.F."/>
            <person name="Chain P."/>
            <person name="Chu M.C."/>
            <person name="Duffield M."/>
            <person name="Fuxelius H.-H."/>
            <person name="Garcia E."/>
            <person name="Haelltorp G."/>
            <person name="Johansson D."/>
            <person name="Isherwood K.E."/>
            <person name="Karp P.D."/>
            <person name="Larsson E."/>
            <person name="Liu Y."/>
            <person name="Michell S."/>
            <person name="Prior J."/>
            <person name="Prior R."/>
            <person name="Malfatti S."/>
            <person name="Sjoestedt A."/>
            <person name="Svensson K."/>
            <person name="Thompson N."/>
            <person name="Vergez L."/>
            <person name="Wagg J.K."/>
            <person name="Wren B.W."/>
            <person name="Lindler L.E."/>
            <person name="Andersson S.G.E."/>
            <person name="Forsman M."/>
            <person name="Titball R.W."/>
        </authorList>
    </citation>
    <scope>NUCLEOTIDE SEQUENCE [LARGE SCALE GENOMIC DNA]</scope>
    <source>
        <strain>SCHU S4 / Schu 4</strain>
    </source>
</reference>
<sequence length="282" mass="32106">MSEYISLEQYNTYRIKSFAKYVYFPTNNQELLDIVNNHNKLFFLGNGSNVIFSKEYYDDVAFVIFTKKFNSFNIIDNYASVQAGVLLQDLAFATYNASLSGIETFYDVPASVGGALIMNAGAYGDEIYTCVKSVTILDLNTKQIKKYLKKDIEYGYRYSIFKYMKDICILSAEFEFEYKSKQEIKAKLDDIYSRRLSNLPQKPTAGSVFKRPQANMPVGIMVEQLGLKGKQIGDAQISPKHGGIIVNNGNATGQNILDLIEFIKQQILEHYNIELHEEQIVI</sequence>
<feature type="chain" id="PRO_0000224684" description="UDP-N-acetylenolpyruvoylglucosamine reductase">
    <location>
        <begin position="1"/>
        <end position="282"/>
    </location>
</feature>
<feature type="domain" description="FAD-binding PCMH-type" evidence="1">
    <location>
        <begin position="15"/>
        <end position="179"/>
    </location>
</feature>
<feature type="active site" evidence="1">
    <location>
        <position position="157"/>
    </location>
</feature>
<feature type="active site" description="Proton donor" evidence="1">
    <location>
        <position position="207"/>
    </location>
</feature>
<feature type="active site" evidence="1">
    <location>
        <position position="278"/>
    </location>
</feature>